<sequence length="446" mass="50425">MSGQNNVVGVHYKVGRRIGEGSFGVIFEGTNLLNNQQVAIKFEPRRSDAPQLRDEYRTYKLLAGCTGIPNVYYFGQEGLHNILVIDLLGPSLEDLLDLCGRKFSVKTVAMAAKQMLARVQSIHEKSLVYRDIKPDNFLIGRPNSKNANMIYVVDFGMVKFYRDPVTKQHIPYREKKNLSGTARYMSINTHLGREQSRRDDLEALGHVFMYFLRGSLPWQGLKAATNKQKYERIGEKKQSTPLRELCAGFPEEFYKYMHYARNLAFDATPDYDYLQGLFSKVLERLNTTEDENFDWNLLNNGKGWQSLKSRNAETENQRSSKPPAPKLESKSPALQNHASTQNVVSKRSDYEKPFAEPHLNSASDSAEPNQNSLPNPPTETKATTTVPDRSGLATNQPAPVDVHDSSEERVTREQVQNATKETEAPKKKKSFWASILSCCSGSNEDT</sequence>
<protein>
    <recommendedName>
        <fullName>Casein kinase I homolog 1</fullName>
        <ecNumber>2.7.11.1</ecNumber>
    </recommendedName>
</protein>
<organism>
    <name type="scientific">Schizosaccharomyces pombe (strain 972 / ATCC 24843)</name>
    <name type="common">Fission yeast</name>
    <dbReference type="NCBI Taxonomy" id="284812"/>
    <lineage>
        <taxon>Eukaryota</taxon>
        <taxon>Fungi</taxon>
        <taxon>Dikarya</taxon>
        <taxon>Ascomycota</taxon>
        <taxon>Taphrinomycotina</taxon>
        <taxon>Schizosaccharomycetes</taxon>
        <taxon>Schizosaccharomycetales</taxon>
        <taxon>Schizosaccharomycetaceae</taxon>
        <taxon>Schizosaccharomyces</taxon>
    </lineage>
</organism>
<accession>P40233</accession>
<accession>Q9UUL9</accession>
<proteinExistence type="evidence at protein level"/>
<gene>
    <name type="primary">cki1</name>
    <name type="ORF">SPBC1347.06c</name>
</gene>
<name>CKI1_SCHPO</name>
<dbReference type="EC" id="2.7.11.1"/>
<dbReference type="EMBL" id="U06929">
    <property type="protein sequence ID" value="AAA19019.1"/>
    <property type="molecule type" value="mRNA"/>
</dbReference>
<dbReference type="EMBL" id="CU329671">
    <property type="protein sequence ID" value="CAB37437.1"/>
    <property type="molecule type" value="Genomic_DNA"/>
</dbReference>
<dbReference type="PIR" id="A53581">
    <property type="entry name" value="A53581"/>
</dbReference>
<dbReference type="RefSeq" id="NP_596698.1">
    <property type="nucleotide sequence ID" value="NM_001022622.2"/>
</dbReference>
<dbReference type="PDB" id="1CSN">
    <property type="method" value="X-ray"/>
    <property type="resolution" value="2.00 A"/>
    <property type="chains" value="A=1-298"/>
</dbReference>
<dbReference type="PDB" id="1EH4">
    <property type="method" value="X-ray"/>
    <property type="resolution" value="2.80 A"/>
    <property type="chains" value="A/B=1-298"/>
</dbReference>
<dbReference type="PDB" id="2CSN">
    <property type="method" value="X-ray"/>
    <property type="resolution" value="2.50 A"/>
    <property type="chains" value="A=2-298"/>
</dbReference>
<dbReference type="PDBsum" id="1CSN"/>
<dbReference type="PDBsum" id="1EH4"/>
<dbReference type="PDBsum" id="2CSN"/>
<dbReference type="SMR" id="P40233"/>
<dbReference type="BioGRID" id="276168">
    <property type="interactions" value="3"/>
</dbReference>
<dbReference type="FunCoup" id="P40233">
    <property type="interactions" value="543"/>
</dbReference>
<dbReference type="IntAct" id="P40233">
    <property type="interactions" value="1"/>
</dbReference>
<dbReference type="MINT" id="P40233"/>
<dbReference type="STRING" id="284812.P40233"/>
<dbReference type="iPTMnet" id="P40233"/>
<dbReference type="PaxDb" id="4896-SPBC1347.06c.1"/>
<dbReference type="EnsemblFungi" id="SPBC1347.06c.1">
    <property type="protein sequence ID" value="SPBC1347.06c.1:pep"/>
    <property type="gene ID" value="SPBC1347.06c"/>
</dbReference>
<dbReference type="PomBase" id="SPBC1347.06c">
    <property type="gene designation" value="cki1"/>
</dbReference>
<dbReference type="VEuPathDB" id="FungiDB:SPBC1347.06c"/>
<dbReference type="eggNOG" id="KOG1165">
    <property type="taxonomic scope" value="Eukaryota"/>
</dbReference>
<dbReference type="HOGENOM" id="CLU_019279_1_0_1"/>
<dbReference type="InParanoid" id="P40233"/>
<dbReference type="OMA" id="GRGWDYK"/>
<dbReference type="PhylomeDB" id="P40233"/>
<dbReference type="BRENDA" id="2.7.11.1">
    <property type="organism ID" value="5613"/>
</dbReference>
<dbReference type="EvolutionaryTrace" id="P40233"/>
<dbReference type="PRO" id="PR:P40233"/>
<dbReference type="Proteomes" id="UP000002485">
    <property type="component" value="Chromosome II"/>
</dbReference>
<dbReference type="GO" id="GO:0005737">
    <property type="term" value="C:cytoplasm"/>
    <property type="evidence" value="ECO:0000314"/>
    <property type="project" value="PomBase"/>
</dbReference>
<dbReference type="GO" id="GO:0000324">
    <property type="term" value="C:fungal-type vacuole"/>
    <property type="evidence" value="ECO:0000314"/>
    <property type="project" value="PomBase"/>
</dbReference>
<dbReference type="GO" id="GO:0005634">
    <property type="term" value="C:nucleus"/>
    <property type="evidence" value="ECO:0000318"/>
    <property type="project" value="GO_Central"/>
</dbReference>
<dbReference type="GO" id="GO:0005524">
    <property type="term" value="F:ATP binding"/>
    <property type="evidence" value="ECO:0000314"/>
    <property type="project" value="PomBase"/>
</dbReference>
<dbReference type="GO" id="GO:0000287">
    <property type="term" value="F:magnesium ion binding"/>
    <property type="evidence" value="ECO:0000314"/>
    <property type="project" value="PomBase"/>
</dbReference>
<dbReference type="GO" id="GO:0106310">
    <property type="term" value="F:protein serine kinase activity"/>
    <property type="evidence" value="ECO:0007669"/>
    <property type="project" value="RHEA"/>
</dbReference>
<dbReference type="GO" id="GO:0004674">
    <property type="term" value="F:protein serine/threonine kinase activity"/>
    <property type="evidence" value="ECO:0000314"/>
    <property type="project" value="PomBase"/>
</dbReference>
<dbReference type="GO" id="GO:0004713">
    <property type="term" value="F:protein tyrosine kinase activity"/>
    <property type="evidence" value="ECO:0000314"/>
    <property type="project" value="PomBase"/>
</dbReference>
<dbReference type="GO" id="GO:0006897">
    <property type="term" value="P:endocytosis"/>
    <property type="evidence" value="ECO:0000318"/>
    <property type="project" value="GO_Central"/>
</dbReference>
<dbReference type="GO" id="GO:0030100">
    <property type="term" value="P:regulation of endocytosis"/>
    <property type="evidence" value="ECO:0000266"/>
    <property type="project" value="PomBase"/>
</dbReference>
<dbReference type="GO" id="GO:0007165">
    <property type="term" value="P:signal transduction"/>
    <property type="evidence" value="ECO:0000318"/>
    <property type="project" value="GO_Central"/>
</dbReference>
<dbReference type="CDD" id="cd14127">
    <property type="entry name" value="STKc_CK1_fungal"/>
    <property type="match status" value="1"/>
</dbReference>
<dbReference type="FunFam" id="1.10.510.10:FF:000160">
    <property type="entry name" value="Casein kinase I 1"/>
    <property type="match status" value="1"/>
</dbReference>
<dbReference type="FunFam" id="3.30.200.20:FF:000538">
    <property type="entry name" value="Putative Casein kinase I"/>
    <property type="match status" value="1"/>
</dbReference>
<dbReference type="Gene3D" id="1.10.510.10">
    <property type="entry name" value="Transferase(Phosphotransferase) domain 1"/>
    <property type="match status" value="1"/>
</dbReference>
<dbReference type="InterPro" id="IPR050235">
    <property type="entry name" value="CK1_Ser-Thr_kinase"/>
</dbReference>
<dbReference type="InterPro" id="IPR011009">
    <property type="entry name" value="Kinase-like_dom_sf"/>
</dbReference>
<dbReference type="InterPro" id="IPR000719">
    <property type="entry name" value="Prot_kinase_dom"/>
</dbReference>
<dbReference type="InterPro" id="IPR017441">
    <property type="entry name" value="Protein_kinase_ATP_BS"/>
</dbReference>
<dbReference type="InterPro" id="IPR008271">
    <property type="entry name" value="Ser/Thr_kinase_AS"/>
</dbReference>
<dbReference type="PANTHER" id="PTHR11909">
    <property type="entry name" value="CASEIN KINASE-RELATED"/>
    <property type="match status" value="1"/>
</dbReference>
<dbReference type="Pfam" id="PF00069">
    <property type="entry name" value="Pkinase"/>
    <property type="match status" value="1"/>
</dbReference>
<dbReference type="SMART" id="SM00220">
    <property type="entry name" value="S_TKc"/>
    <property type="match status" value="1"/>
</dbReference>
<dbReference type="SUPFAM" id="SSF56112">
    <property type="entry name" value="Protein kinase-like (PK-like)"/>
    <property type="match status" value="1"/>
</dbReference>
<dbReference type="PROSITE" id="PS00107">
    <property type="entry name" value="PROTEIN_KINASE_ATP"/>
    <property type="match status" value="1"/>
</dbReference>
<dbReference type="PROSITE" id="PS50011">
    <property type="entry name" value="PROTEIN_KINASE_DOM"/>
    <property type="match status" value="1"/>
</dbReference>
<dbReference type="PROSITE" id="PS00108">
    <property type="entry name" value="PROTEIN_KINASE_ST"/>
    <property type="match status" value="1"/>
</dbReference>
<keyword id="KW-0002">3D-structure</keyword>
<keyword id="KW-0067">ATP-binding</keyword>
<keyword id="KW-0963">Cytoplasm</keyword>
<keyword id="KW-0418">Kinase</keyword>
<keyword id="KW-0547">Nucleotide-binding</keyword>
<keyword id="KW-0597">Phosphoprotein</keyword>
<keyword id="KW-1185">Reference proteome</keyword>
<keyword id="KW-0723">Serine/threonine-protein kinase</keyword>
<keyword id="KW-0808">Transferase</keyword>
<evidence type="ECO:0000255" key="1">
    <source>
        <dbReference type="PROSITE-ProRule" id="PRU00159"/>
    </source>
</evidence>
<evidence type="ECO:0000256" key="2">
    <source>
        <dbReference type="SAM" id="MobiDB-lite"/>
    </source>
</evidence>
<evidence type="ECO:0000269" key="3">
    <source>
    </source>
</evidence>
<evidence type="ECO:0000305" key="4"/>
<evidence type="ECO:0007829" key="5">
    <source>
        <dbReference type="PDB" id="1CSN"/>
    </source>
</evidence>
<evidence type="ECO:0007829" key="6">
    <source>
        <dbReference type="PDB" id="1EH4"/>
    </source>
</evidence>
<feature type="chain" id="PRO_0000192861" description="Casein kinase I homolog 1">
    <location>
        <begin position="1"/>
        <end position="446"/>
    </location>
</feature>
<feature type="domain" description="Protein kinase" evidence="1">
    <location>
        <begin position="12"/>
        <end position="274"/>
    </location>
</feature>
<feature type="region of interest" description="Disordered" evidence="2">
    <location>
        <begin position="308"/>
        <end position="430"/>
    </location>
</feature>
<feature type="compositionally biased region" description="Polar residues" evidence="2">
    <location>
        <begin position="332"/>
        <end position="345"/>
    </location>
</feature>
<feature type="compositionally biased region" description="Basic and acidic residues" evidence="2">
    <location>
        <begin position="346"/>
        <end position="355"/>
    </location>
</feature>
<feature type="compositionally biased region" description="Polar residues" evidence="2">
    <location>
        <begin position="360"/>
        <end position="397"/>
    </location>
</feature>
<feature type="compositionally biased region" description="Basic and acidic residues" evidence="2">
    <location>
        <begin position="401"/>
        <end position="412"/>
    </location>
</feature>
<feature type="active site" description="Proton acceptor">
    <location>
        <position position="131"/>
    </location>
</feature>
<feature type="binding site">
    <location>
        <begin position="18"/>
        <end position="26"/>
    </location>
    <ligand>
        <name>ATP</name>
        <dbReference type="ChEBI" id="CHEBI:30616"/>
    </ligand>
</feature>
<feature type="binding site">
    <location>
        <position position="41"/>
    </location>
    <ligand>
        <name>ATP</name>
        <dbReference type="ChEBI" id="CHEBI:30616"/>
    </ligand>
</feature>
<feature type="modified residue" description="Phosphoserine" evidence="3">
    <location>
        <position position="329"/>
    </location>
</feature>
<feature type="sequence conflict" description="In Ref. 1; AAA19019." evidence="4" ref="1">
    <original>I</original>
    <variation>V</variation>
    <location>
        <position position="82"/>
    </location>
</feature>
<feature type="sequence conflict" description="In Ref. 1; AAA19019." evidence="4" ref="1">
    <original>R</original>
    <variation>Q</variation>
    <location>
        <position position="310"/>
    </location>
</feature>
<feature type="turn" evidence="5">
    <location>
        <begin position="9"/>
        <end position="11"/>
    </location>
</feature>
<feature type="strand" evidence="5">
    <location>
        <begin position="12"/>
        <end position="20"/>
    </location>
</feature>
<feature type="strand" evidence="5">
    <location>
        <begin position="25"/>
        <end position="31"/>
    </location>
</feature>
<feature type="turn" evidence="5">
    <location>
        <begin position="32"/>
        <end position="35"/>
    </location>
</feature>
<feature type="strand" evidence="5">
    <location>
        <begin position="36"/>
        <end position="44"/>
    </location>
</feature>
<feature type="helix" evidence="5">
    <location>
        <begin position="52"/>
        <end position="61"/>
    </location>
</feature>
<feature type="turn" evidence="5">
    <location>
        <begin position="62"/>
        <end position="64"/>
    </location>
</feature>
<feature type="strand" evidence="6">
    <location>
        <begin position="65"/>
        <end position="67"/>
    </location>
</feature>
<feature type="strand" evidence="5">
    <location>
        <begin position="71"/>
        <end position="77"/>
    </location>
</feature>
<feature type="strand" evidence="5">
    <location>
        <begin position="80"/>
        <end position="86"/>
    </location>
</feature>
<feature type="helix" evidence="5">
    <location>
        <begin position="92"/>
        <end position="98"/>
    </location>
</feature>
<feature type="turn" evidence="5">
    <location>
        <begin position="99"/>
        <end position="101"/>
    </location>
</feature>
<feature type="helix" evidence="5">
    <location>
        <begin position="105"/>
        <end position="123"/>
    </location>
</feature>
<feature type="turn" evidence="5">
    <location>
        <begin position="124"/>
        <end position="126"/>
    </location>
</feature>
<feature type="helix" evidence="5">
    <location>
        <begin position="134"/>
        <end position="136"/>
    </location>
</feature>
<feature type="strand" evidence="5">
    <location>
        <begin position="137"/>
        <end position="139"/>
    </location>
</feature>
<feature type="strand" evidence="5">
    <location>
        <begin position="142"/>
        <end position="144"/>
    </location>
</feature>
<feature type="turn" evidence="5">
    <location>
        <begin position="145"/>
        <end position="148"/>
    </location>
</feature>
<feature type="strand" evidence="5">
    <location>
        <begin position="150"/>
        <end position="152"/>
    </location>
</feature>
<feature type="strand" evidence="5">
    <location>
        <begin position="159"/>
        <end position="162"/>
    </location>
</feature>
<feature type="turn" evidence="5">
    <location>
        <begin position="164"/>
        <end position="166"/>
    </location>
</feature>
<feature type="turn" evidence="5">
    <location>
        <begin position="182"/>
        <end position="184"/>
    </location>
</feature>
<feature type="helix" evidence="5">
    <location>
        <begin position="187"/>
        <end position="190"/>
    </location>
</feature>
<feature type="helix" evidence="5">
    <location>
        <begin position="197"/>
        <end position="213"/>
    </location>
</feature>
<feature type="helix" evidence="5">
    <location>
        <begin position="226"/>
        <end position="239"/>
    </location>
</feature>
<feature type="helix" evidence="5">
    <location>
        <begin position="242"/>
        <end position="245"/>
    </location>
</feature>
<feature type="turn" evidence="5">
    <location>
        <begin position="246"/>
        <end position="248"/>
    </location>
</feature>
<feature type="helix" evidence="5">
    <location>
        <begin position="251"/>
        <end position="262"/>
    </location>
</feature>
<feature type="helix" evidence="5">
    <location>
        <begin position="271"/>
        <end position="284"/>
    </location>
</feature>
<feature type="helix" evidence="5">
    <location>
        <begin position="294"/>
        <end position="296"/>
    </location>
</feature>
<comment type="function">
    <text>Casein kinases are operationally defined by their preferential utilization of acidic proteins such as caseins as substrates.</text>
</comment>
<comment type="catalytic activity">
    <reaction>
        <text>L-seryl-[protein] + ATP = O-phospho-L-seryl-[protein] + ADP + H(+)</text>
        <dbReference type="Rhea" id="RHEA:17989"/>
        <dbReference type="Rhea" id="RHEA-COMP:9863"/>
        <dbReference type="Rhea" id="RHEA-COMP:11604"/>
        <dbReference type="ChEBI" id="CHEBI:15378"/>
        <dbReference type="ChEBI" id="CHEBI:29999"/>
        <dbReference type="ChEBI" id="CHEBI:30616"/>
        <dbReference type="ChEBI" id="CHEBI:83421"/>
        <dbReference type="ChEBI" id="CHEBI:456216"/>
        <dbReference type="EC" id="2.7.11.1"/>
    </reaction>
</comment>
<comment type="catalytic activity">
    <reaction>
        <text>L-threonyl-[protein] + ATP = O-phospho-L-threonyl-[protein] + ADP + H(+)</text>
        <dbReference type="Rhea" id="RHEA:46608"/>
        <dbReference type="Rhea" id="RHEA-COMP:11060"/>
        <dbReference type="Rhea" id="RHEA-COMP:11605"/>
        <dbReference type="ChEBI" id="CHEBI:15378"/>
        <dbReference type="ChEBI" id="CHEBI:30013"/>
        <dbReference type="ChEBI" id="CHEBI:30616"/>
        <dbReference type="ChEBI" id="CHEBI:61977"/>
        <dbReference type="ChEBI" id="CHEBI:456216"/>
        <dbReference type="EC" id="2.7.11.1"/>
    </reaction>
</comment>
<comment type="subcellular location">
    <subcellularLocation>
        <location>Cytoplasm</location>
    </subcellularLocation>
</comment>
<comment type="similarity">
    <text evidence="4">Belongs to the protein kinase superfamily. CK1 Ser/Thr protein kinase family. Casein kinase I subfamily.</text>
</comment>
<reference key="1">
    <citation type="journal article" date="1994" name="J. Biol. Chem.">
        <title>Cytoplasmic forms of fission yeast casein kinase-1 associate primarily with the particulate fraction of the cell.</title>
        <authorList>
            <person name="Wang P.-C."/>
            <person name="Vancura A."/>
            <person name="Desai A."/>
            <person name="Carmel G."/>
            <person name="Kuret J."/>
        </authorList>
    </citation>
    <scope>NUCLEOTIDE SEQUENCE [MRNA]</scope>
    <source>
        <strain>SP66</strain>
    </source>
</reference>
<reference key="2">
    <citation type="journal article" date="2002" name="Nature">
        <title>The genome sequence of Schizosaccharomyces pombe.</title>
        <authorList>
            <person name="Wood V."/>
            <person name="Gwilliam R."/>
            <person name="Rajandream M.A."/>
            <person name="Lyne M.H."/>
            <person name="Lyne R."/>
            <person name="Stewart A."/>
            <person name="Sgouros J.G."/>
            <person name="Peat N."/>
            <person name="Hayles J."/>
            <person name="Baker S.G."/>
            <person name="Basham D."/>
            <person name="Bowman S."/>
            <person name="Brooks K."/>
            <person name="Brown D."/>
            <person name="Brown S."/>
            <person name="Chillingworth T."/>
            <person name="Churcher C.M."/>
            <person name="Collins M."/>
            <person name="Connor R."/>
            <person name="Cronin A."/>
            <person name="Davis P."/>
            <person name="Feltwell T."/>
            <person name="Fraser A."/>
            <person name="Gentles S."/>
            <person name="Goble A."/>
            <person name="Hamlin N."/>
            <person name="Harris D.E."/>
            <person name="Hidalgo J."/>
            <person name="Hodgson G."/>
            <person name="Holroyd S."/>
            <person name="Hornsby T."/>
            <person name="Howarth S."/>
            <person name="Huckle E.J."/>
            <person name="Hunt S."/>
            <person name="Jagels K."/>
            <person name="James K.D."/>
            <person name="Jones L."/>
            <person name="Jones M."/>
            <person name="Leather S."/>
            <person name="McDonald S."/>
            <person name="McLean J."/>
            <person name="Mooney P."/>
            <person name="Moule S."/>
            <person name="Mungall K.L."/>
            <person name="Murphy L.D."/>
            <person name="Niblett D."/>
            <person name="Odell C."/>
            <person name="Oliver K."/>
            <person name="O'Neil S."/>
            <person name="Pearson D."/>
            <person name="Quail M.A."/>
            <person name="Rabbinowitsch E."/>
            <person name="Rutherford K.M."/>
            <person name="Rutter S."/>
            <person name="Saunders D."/>
            <person name="Seeger K."/>
            <person name="Sharp S."/>
            <person name="Skelton J."/>
            <person name="Simmonds M.N."/>
            <person name="Squares R."/>
            <person name="Squares S."/>
            <person name="Stevens K."/>
            <person name="Taylor K."/>
            <person name="Taylor R.G."/>
            <person name="Tivey A."/>
            <person name="Walsh S.V."/>
            <person name="Warren T."/>
            <person name="Whitehead S."/>
            <person name="Woodward J.R."/>
            <person name="Volckaert G."/>
            <person name="Aert R."/>
            <person name="Robben J."/>
            <person name="Grymonprez B."/>
            <person name="Weltjens I."/>
            <person name="Vanstreels E."/>
            <person name="Rieger M."/>
            <person name="Schaefer M."/>
            <person name="Mueller-Auer S."/>
            <person name="Gabel C."/>
            <person name="Fuchs M."/>
            <person name="Duesterhoeft A."/>
            <person name="Fritzc C."/>
            <person name="Holzer E."/>
            <person name="Moestl D."/>
            <person name="Hilbert H."/>
            <person name="Borzym K."/>
            <person name="Langer I."/>
            <person name="Beck A."/>
            <person name="Lehrach H."/>
            <person name="Reinhardt R."/>
            <person name="Pohl T.M."/>
            <person name="Eger P."/>
            <person name="Zimmermann W."/>
            <person name="Wedler H."/>
            <person name="Wambutt R."/>
            <person name="Purnelle B."/>
            <person name="Goffeau A."/>
            <person name="Cadieu E."/>
            <person name="Dreano S."/>
            <person name="Gloux S."/>
            <person name="Lelaure V."/>
            <person name="Mottier S."/>
            <person name="Galibert F."/>
            <person name="Aves S.J."/>
            <person name="Xiang Z."/>
            <person name="Hunt C."/>
            <person name="Moore K."/>
            <person name="Hurst S.M."/>
            <person name="Lucas M."/>
            <person name="Rochet M."/>
            <person name="Gaillardin C."/>
            <person name="Tallada V.A."/>
            <person name="Garzon A."/>
            <person name="Thode G."/>
            <person name="Daga R.R."/>
            <person name="Cruzado L."/>
            <person name="Jimenez J."/>
            <person name="Sanchez M."/>
            <person name="del Rey F."/>
            <person name="Benito J."/>
            <person name="Dominguez A."/>
            <person name="Revuelta J.L."/>
            <person name="Moreno S."/>
            <person name="Armstrong J."/>
            <person name="Forsburg S.L."/>
            <person name="Cerutti L."/>
            <person name="Lowe T."/>
            <person name="McCombie W.R."/>
            <person name="Paulsen I."/>
            <person name="Potashkin J."/>
            <person name="Shpakovski G.V."/>
            <person name="Ussery D."/>
            <person name="Barrell B.G."/>
            <person name="Nurse P."/>
        </authorList>
    </citation>
    <scope>NUCLEOTIDE SEQUENCE [LARGE SCALE GENOMIC DNA]</scope>
    <source>
        <strain>972 / ATCC 24843</strain>
    </source>
</reference>
<reference key="3">
    <citation type="journal article" date="2008" name="J. Proteome Res.">
        <title>Phosphoproteome analysis of fission yeast.</title>
        <authorList>
            <person name="Wilson-Grady J.T."/>
            <person name="Villen J."/>
            <person name="Gygi S.P."/>
        </authorList>
    </citation>
    <scope>PHOSPHORYLATION [LARGE SCALE ANALYSIS] AT SER-329</scope>
    <scope>IDENTIFICATION BY MASS SPECTROMETRY</scope>
</reference>
<reference key="4">
    <citation type="journal article" date="1995" name="EMBO J.">
        <title>Crystal structure of casein kinase-1, a phosphate-directed protein kinase.</title>
        <authorList>
            <person name="Xu R.-M."/>
            <person name="Carmel G."/>
            <person name="Sweet R.M."/>
            <person name="Kuret J."/>
            <person name="Cheng X."/>
        </authorList>
    </citation>
    <scope>X-RAY CRYSTALLOGRAPHY (2.0 ANGSTROMS) OF 1-298</scope>
</reference>